<protein>
    <recommendedName>
        <fullName>Uncharacterized protein MJ1257</fullName>
    </recommendedName>
</protein>
<feature type="chain" id="PRO_0000107243" description="Uncharacterized protein MJ1257">
    <location>
        <begin position="1"/>
        <end position="349"/>
    </location>
</feature>
<feature type="domain" description="THUMP" evidence="1">
    <location>
        <begin position="51"/>
        <end position="160"/>
    </location>
</feature>
<proteinExistence type="predicted"/>
<accession>Q58654</accession>
<name>Y1257_METJA</name>
<organism>
    <name type="scientific">Methanocaldococcus jannaschii (strain ATCC 43067 / DSM 2661 / JAL-1 / JCM 10045 / NBRC 100440)</name>
    <name type="common">Methanococcus jannaschii</name>
    <dbReference type="NCBI Taxonomy" id="243232"/>
    <lineage>
        <taxon>Archaea</taxon>
        <taxon>Methanobacteriati</taxon>
        <taxon>Methanobacteriota</taxon>
        <taxon>Methanomada group</taxon>
        <taxon>Methanococci</taxon>
        <taxon>Methanococcales</taxon>
        <taxon>Methanocaldococcaceae</taxon>
        <taxon>Methanocaldococcus</taxon>
    </lineage>
</organism>
<gene>
    <name type="ordered locus">MJ1257</name>
</gene>
<sequence length="349" mass="41198">MKPVALVTTKPGFEPQLREELNKLPIKKKILWTPFRGILKVLSQNPYEFLNIIKENKNNLKFSLRIIPLEIGCQTDINEIKKAISFLINKKKEKLKNKSFVVRCNRRGNHEFTSEELERIIGEYVLENFKDLNLRVNLKDWDFKINIEILQDESYISIFQDEFNELVIEENIKNLKNLKRYIERPLNRSERKMQELMEKFPFIFENINCVVDIGSSPGGWAKMLSKKAKKVYAIDTGELKIKANNIIHIKKRAENVDFEKDINEEIDLITNDTNLYPDESLFLTLKFAKHLKTNGYIIHTLKARNLKTKKEDLEKVLKILSYYRNIKIFKIINLRANTKNELTLILKKV</sequence>
<dbReference type="EMBL" id="L77117">
    <property type="protein sequence ID" value="AAB99268.1"/>
    <property type="molecule type" value="Genomic_DNA"/>
</dbReference>
<dbReference type="PIR" id="H64456">
    <property type="entry name" value="H64456"/>
</dbReference>
<dbReference type="RefSeq" id="WP_010870770.1">
    <property type="nucleotide sequence ID" value="NC_000909.1"/>
</dbReference>
<dbReference type="SMR" id="Q58654"/>
<dbReference type="FunCoup" id="Q58654">
    <property type="interactions" value="2"/>
</dbReference>
<dbReference type="STRING" id="243232.MJ_1257"/>
<dbReference type="PaxDb" id="243232-MJ_1257"/>
<dbReference type="EnsemblBacteria" id="AAB99268">
    <property type="protein sequence ID" value="AAB99268"/>
    <property type="gene ID" value="MJ_1257"/>
</dbReference>
<dbReference type="GeneID" id="1452155"/>
<dbReference type="KEGG" id="mja:MJ_1257"/>
<dbReference type="eggNOG" id="arCOG00056">
    <property type="taxonomic scope" value="Archaea"/>
</dbReference>
<dbReference type="HOGENOM" id="CLU_775255_0_0_2"/>
<dbReference type="InParanoid" id="Q58654"/>
<dbReference type="OrthoDB" id="26307at2157"/>
<dbReference type="Proteomes" id="UP000000805">
    <property type="component" value="Chromosome"/>
</dbReference>
<dbReference type="GO" id="GO:0005829">
    <property type="term" value="C:cytosol"/>
    <property type="evidence" value="ECO:0000318"/>
    <property type="project" value="GO_Central"/>
</dbReference>
<dbReference type="GO" id="GO:0008168">
    <property type="term" value="F:methyltransferase activity"/>
    <property type="evidence" value="ECO:0007669"/>
    <property type="project" value="InterPro"/>
</dbReference>
<dbReference type="GO" id="GO:0003723">
    <property type="term" value="F:RNA binding"/>
    <property type="evidence" value="ECO:0007669"/>
    <property type="project" value="InterPro"/>
</dbReference>
<dbReference type="GO" id="GO:0032259">
    <property type="term" value="P:methylation"/>
    <property type="evidence" value="ECO:0007669"/>
    <property type="project" value="InterPro"/>
</dbReference>
<dbReference type="GO" id="GO:0052837">
    <property type="term" value="P:thiazole biosynthetic process"/>
    <property type="evidence" value="ECO:0000318"/>
    <property type="project" value="GO_Central"/>
</dbReference>
<dbReference type="GO" id="GO:0002937">
    <property type="term" value="P:tRNA 4-thiouridine biosynthesis"/>
    <property type="evidence" value="ECO:0000318"/>
    <property type="project" value="GO_Central"/>
</dbReference>
<dbReference type="CDD" id="cd02440">
    <property type="entry name" value="AdoMet_MTases"/>
    <property type="match status" value="1"/>
</dbReference>
<dbReference type="FunFam" id="3.30.2130.30:FF:000016">
    <property type="entry name" value="N2-methylguanosine tRNA methyltransferase"/>
    <property type="match status" value="1"/>
</dbReference>
<dbReference type="Gene3D" id="3.30.2130.30">
    <property type="match status" value="1"/>
</dbReference>
<dbReference type="Gene3D" id="3.40.50.150">
    <property type="entry name" value="Vaccinia Virus protein VP39"/>
    <property type="match status" value="1"/>
</dbReference>
<dbReference type="InterPro" id="IPR002877">
    <property type="entry name" value="RNA_MeTrfase_FtsJ_dom"/>
</dbReference>
<dbReference type="InterPro" id="IPR029063">
    <property type="entry name" value="SAM-dependent_MTases_sf"/>
</dbReference>
<dbReference type="InterPro" id="IPR004114">
    <property type="entry name" value="THUMP_dom"/>
</dbReference>
<dbReference type="InterPro" id="IPR050102">
    <property type="entry name" value="tRNA_sulfurtransferase_ThiI"/>
</dbReference>
<dbReference type="PANTHER" id="PTHR43209">
    <property type="entry name" value="TRNA SULFURTRANSFERASE"/>
    <property type="match status" value="1"/>
</dbReference>
<dbReference type="PANTHER" id="PTHR43209:SF1">
    <property type="entry name" value="TRNA SULFURTRANSFERASE"/>
    <property type="match status" value="1"/>
</dbReference>
<dbReference type="Pfam" id="PF01728">
    <property type="entry name" value="FtsJ"/>
    <property type="match status" value="1"/>
</dbReference>
<dbReference type="Pfam" id="PF02926">
    <property type="entry name" value="THUMP"/>
    <property type="match status" value="1"/>
</dbReference>
<dbReference type="SMART" id="SM00981">
    <property type="entry name" value="THUMP"/>
    <property type="match status" value="1"/>
</dbReference>
<dbReference type="SUPFAM" id="SSF53335">
    <property type="entry name" value="S-adenosyl-L-methionine-dependent methyltransferases"/>
    <property type="match status" value="1"/>
</dbReference>
<dbReference type="SUPFAM" id="SSF143437">
    <property type="entry name" value="THUMP domain-like"/>
    <property type="match status" value="1"/>
</dbReference>
<dbReference type="PROSITE" id="PS51165">
    <property type="entry name" value="THUMP"/>
    <property type="match status" value="1"/>
</dbReference>
<keyword id="KW-1185">Reference proteome</keyword>
<reference key="1">
    <citation type="journal article" date="1996" name="Science">
        <title>Complete genome sequence of the methanogenic archaeon, Methanococcus jannaschii.</title>
        <authorList>
            <person name="Bult C.J."/>
            <person name="White O."/>
            <person name="Olsen G.J."/>
            <person name="Zhou L."/>
            <person name="Fleischmann R.D."/>
            <person name="Sutton G.G."/>
            <person name="Blake J.A."/>
            <person name="FitzGerald L.M."/>
            <person name="Clayton R.A."/>
            <person name="Gocayne J.D."/>
            <person name="Kerlavage A.R."/>
            <person name="Dougherty B.A."/>
            <person name="Tomb J.-F."/>
            <person name="Adams M.D."/>
            <person name="Reich C.I."/>
            <person name="Overbeek R."/>
            <person name="Kirkness E.F."/>
            <person name="Weinstock K.G."/>
            <person name="Merrick J.M."/>
            <person name="Glodek A."/>
            <person name="Scott J.L."/>
            <person name="Geoghagen N.S.M."/>
            <person name="Weidman J.F."/>
            <person name="Fuhrmann J.L."/>
            <person name="Nguyen D."/>
            <person name="Utterback T.R."/>
            <person name="Kelley J.M."/>
            <person name="Peterson J.D."/>
            <person name="Sadow P.W."/>
            <person name="Hanna M.C."/>
            <person name="Cotton M.D."/>
            <person name="Roberts K.M."/>
            <person name="Hurst M.A."/>
            <person name="Kaine B.P."/>
            <person name="Borodovsky M."/>
            <person name="Klenk H.-P."/>
            <person name="Fraser C.M."/>
            <person name="Smith H.O."/>
            <person name="Woese C.R."/>
            <person name="Venter J.C."/>
        </authorList>
    </citation>
    <scope>NUCLEOTIDE SEQUENCE [LARGE SCALE GENOMIC DNA]</scope>
    <source>
        <strain>ATCC 43067 / DSM 2661 / JAL-1 / JCM 10045 / NBRC 100440</strain>
    </source>
</reference>
<evidence type="ECO:0000255" key="1">
    <source>
        <dbReference type="PROSITE-ProRule" id="PRU00529"/>
    </source>
</evidence>